<sequence length="632" mass="72883">MSVHHAAYIDYALRVTENMTDVMTGSDTVTLKSYQHFVSRVFLGLDKMHSLLLFHETGVGKTITTVFILKHLKDVYTNWIIILLVKKALVEDPWTYSITKYAPEILKDCIFITYDDKNFHNKFFTNIKTISSRSRLCIIIDECHNFISKSIVKEDGKQRPTKSVYNYLLKNVALHHHKLICLSATPIVNSVKEFIMLVNLLRPKILNNISLFENKRLINESELINKLGAICSYIVTNEFSIFDDVEGSATFAKKNVYFQYVNMTQKQEQVYQKAKSAELKAGTSSFRIYRRMAATFTFDTFLDKTDKTPEEIVNEQVTLYKDFEKFIKTKKFSDHALSHFKKGQSLNGTSSADDISFLNELREHSCKFTDVCLRILASPGKCLVFEPFVNQSGINILLLYFSAFNISYIEFSSRTKNTRVQSVAEFNKRENTNGDLIKTCVFSLSGGEGISFFSINDIFILDMTWNEASLRQIIGRAIRLNSHVLTPEHRRYVYVHFIIARLSNGDPTVDEDLLDIIRNKSKEFTQLFKVFKHTSIEWIYEHQTNFSPVDDESGWGALISRSIDENPTTKRVPRIARGQNIWYSHSNRMITVYKGFKTDDGRLFDSDGNFIQTIQANPVIKIHNNKLVYVLD</sequence>
<name>NTP1_RFVKA</name>
<evidence type="ECO:0000250" key="1"/>
<evidence type="ECO:0000255" key="2">
    <source>
        <dbReference type="PROSITE-ProRule" id="PRU00541"/>
    </source>
</evidence>
<evidence type="ECO:0000255" key="3">
    <source>
        <dbReference type="PROSITE-ProRule" id="PRU00542"/>
    </source>
</evidence>
<evidence type="ECO:0000305" key="4"/>
<keyword id="KW-0067">ATP-binding</keyword>
<keyword id="KW-0238">DNA-binding</keyword>
<keyword id="KW-0378">Hydrolase</keyword>
<keyword id="KW-0547">Nucleotide-binding</keyword>
<keyword id="KW-1185">Reference proteome</keyword>
<keyword id="KW-0804">Transcription</keyword>
<keyword id="KW-0946">Virion</keyword>
<protein>
    <recommendedName>
        <fullName>Nucleoside triphosphatase I</fullName>
        <ecNumber>3.6.1.15</ecNumber>
    </recommendedName>
    <alternativeName>
        <fullName>NPH-I</fullName>
    </alternativeName>
    <alternativeName>
        <fullName>Nucleoside triphosphate phosphohydrolase I</fullName>
        <shortName>NPH I</shortName>
    </alternativeName>
</protein>
<comment type="function">
    <text evidence="1">DNA-dependent ATPase required for providing the needed energy to achieve the termination of early transcripts. Acts in concert with the RAP94 subunit of the virion RNA polymerase and the capping enzyme/VTF to catalyze release of UUUUUNU-containing nascent RNA from the elongation complex. NPH-I must bind ssDNA in order to exhibit ATPase activity (By similarity).</text>
</comment>
<comment type="catalytic activity">
    <reaction>
        <text>a ribonucleoside 5'-triphosphate + H2O = a ribonucleoside 5'-diphosphate + phosphate + H(+)</text>
        <dbReference type="Rhea" id="RHEA:23680"/>
        <dbReference type="ChEBI" id="CHEBI:15377"/>
        <dbReference type="ChEBI" id="CHEBI:15378"/>
        <dbReference type="ChEBI" id="CHEBI:43474"/>
        <dbReference type="ChEBI" id="CHEBI:57930"/>
        <dbReference type="ChEBI" id="CHEBI:61557"/>
        <dbReference type="EC" id="3.6.1.15"/>
    </reaction>
</comment>
<comment type="subunit">
    <text evidence="1">Monomer. Interacts (via C-terminus) with RAP94 (via N-terminus). Interacts with the cap-specific mRNA (nucleoside-2'-O-)-methyltransferase (By similarity).</text>
</comment>
<comment type="subcellular location">
    <subcellularLocation>
        <location evidence="1">Virion</location>
    </subcellularLocation>
    <text evidence="1">Virion core enzyme.</text>
</comment>
<comment type="similarity">
    <text evidence="4">Belongs to the helicase family. NPH I subfamily.</text>
</comment>
<feature type="chain" id="PRO_0000099096" description="Nucleoside triphosphatase I">
    <location>
        <begin position="1"/>
        <end position="632"/>
    </location>
</feature>
<feature type="domain" description="Helicase ATP-binding" evidence="2">
    <location>
        <begin position="42"/>
        <end position="204"/>
    </location>
</feature>
<feature type="domain" description="Helicase C-terminal" evidence="3">
    <location>
        <begin position="367"/>
        <end position="532"/>
    </location>
</feature>
<feature type="region of interest" description="Binding to the cap-specific mRNA (nucleoside-2'-O-)-methyltransferase" evidence="1">
    <location>
        <begin position="457"/>
        <end position="524"/>
    </location>
</feature>
<feature type="short sequence motif" description="DEXH box">
    <location>
        <begin position="141"/>
        <end position="144"/>
    </location>
</feature>
<feature type="binding site" evidence="2">
    <location>
        <begin position="55"/>
        <end position="62"/>
    </location>
    <ligand>
        <name>ATP</name>
        <dbReference type="ChEBI" id="CHEBI:30616"/>
    </ligand>
</feature>
<feature type="sequence conflict" description="In Ref. 2." evidence="4" ref="2">
    <original>F</original>
    <variation>V</variation>
    <location>
        <position position="404"/>
    </location>
</feature>
<feature type="sequence conflict" description="In Ref. 2." evidence="4" ref="2">
    <original>H</original>
    <variation>T</variation>
    <location>
        <position position="496"/>
    </location>
</feature>
<gene>
    <name type="primary">NPH1</name>
    <name type="ordered locus">s086L</name>
</gene>
<dbReference type="EC" id="3.6.1.15"/>
<dbReference type="EMBL" id="AF170722">
    <property type="protein sequence ID" value="AAF17970.1"/>
    <property type="molecule type" value="Genomic_DNA"/>
</dbReference>
<dbReference type="RefSeq" id="NP_051975.1">
    <property type="nucleotide sequence ID" value="NC_001266.1"/>
</dbReference>
<dbReference type="SMR" id="Q9Q8Z2"/>
<dbReference type="KEGG" id="vg:1486931"/>
<dbReference type="Proteomes" id="UP000000868">
    <property type="component" value="Segment"/>
</dbReference>
<dbReference type="GO" id="GO:0044423">
    <property type="term" value="C:virion component"/>
    <property type="evidence" value="ECO:0007669"/>
    <property type="project" value="UniProtKB-KW"/>
</dbReference>
<dbReference type="GO" id="GO:0005524">
    <property type="term" value="F:ATP binding"/>
    <property type="evidence" value="ECO:0007669"/>
    <property type="project" value="UniProtKB-KW"/>
</dbReference>
<dbReference type="GO" id="GO:0003677">
    <property type="term" value="F:DNA binding"/>
    <property type="evidence" value="ECO:0007669"/>
    <property type="project" value="UniProtKB-KW"/>
</dbReference>
<dbReference type="GO" id="GO:0017111">
    <property type="term" value="F:ribonucleoside triphosphate phosphatase activity"/>
    <property type="evidence" value="ECO:0007669"/>
    <property type="project" value="UniProtKB-EC"/>
</dbReference>
<dbReference type="GO" id="GO:0006351">
    <property type="term" value="P:DNA-templated transcription"/>
    <property type="evidence" value="ECO:0007669"/>
    <property type="project" value="InterPro"/>
</dbReference>
<dbReference type="Gene3D" id="3.40.50.300">
    <property type="entry name" value="P-loop containing nucleotide triphosphate hydrolases"/>
    <property type="match status" value="2"/>
</dbReference>
<dbReference type="InterPro" id="IPR014001">
    <property type="entry name" value="Helicase_ATP-bd"/>
</dbReference>
<dbReference type="InterPro" id="IPR001650">
    <property type="entry name" value="Helicase_C-like"/>
</dbReference>
<dbReference type="InterPro" id="IPR013676">
    <property type="entry name" value="NPHI_C"/>
</dbReference>
<dbReference type="InterPro" id="IPR027417">
    <property type="entry name" value="P-loop_NTPase"/>
</dbReference>
<dbReference type="InterPro" id="IPR000330">
    <property type="entry name" value="SNF2_N"/>
</dbReference>
<dbReference type="PANTHER" id="PTHR10799">
    <property type="entry name" value="SNF2/RAD54 HELICASE FAMILY"/>
    <property type="match status" value="1"/>
</dbReference>
<dbReference type="Pfam" id="PF00271">
    <property type="entry name" value="Helicase_C"/>
    <property type="match status" value="1"/>
</dbReference>
<dbReference type="Pfam" id="PF08469">
    <property type="entry name" value="NPHI_C"/>
    <property type="match status" value="1"/>
</dbReference>
<dbReference type="Pfam" id="PF00176">
    <property type="entry name" value="SNF2-rel_dom"/>
    <property type="match status" value="1"/>
</dbReference>
<dbReference type="SMART" id="SM00487">
    <property type="entry name" value="DEXDc"/>
    <property type="match status" value="1"/>
</dbReference>
<dbReference type="SMART" id="SM00490">
    <property type="entry name" value="HELICc"/>
    <property type="match status" value="1"/>
</dbReference>
<dbReference type="SUPFAM" id="SSF52540">
    <property type="entry name" value="P-loop containing nucleoside triphosphate hydrolases"/>
    <property type="match status" value="2"/>
</dbReference>
<dbReference type="PROSITE" id="PS51192">
    <property type="entry name" value="HELICASE_ATP_BIND_1"/>
    <property type="match status" value="1"/>
</dbReference>
<dbReference type="PROSITE" id="PS51194">
    <property type="entry name" value="HELICASE_CTER"/>
    <property type="match status" value="1"/>
</dbReference>
<organism>
    <name type="scientific">Rabbit fibroma virus (strain Kasza)</name>
    <name type="common">RFV</name>
    <name type="synonym">Shope fibroma virus (strain Kasza)</name>
    <dbReference type="NCBI Taxonomy" id="10272"/>
    <lineage>
        <taxon>Viruses</taxon>
        <taxon>Varidnaviria</taxon>
        <taxon>Bamfordvirae</taxon>
        <taxon>Nucleocytoviricota</taxon>
        <taxon>Pokkesviricetes</taxon>
        <taxon>Chitovirales</taxon>
        <taxon>Poxviridae</taxon>
        <taxon>Chordopoxvirinae</taxon>
        <taxon>Leporipoxvirus</taxon>
        <taxon>Rabbit fibroma virus</taxon>
    </lineage>
</organism>
<reference key="1">
    <citation type="journal article" date="1999" name="Virology">
        <title>The complete genome sequence of shope (Rabbit) fibroma virus.</title>
        <authorList>
            <person name="Willer D.O."/>
            <person name="McFadden G."/>
            <person name="Evans D.H."/>
        </authorList>
    </citation>
    <scope>NUCLEOTIDE SEQUENCE [LARGE SCALE GENOMIC DNA]</scope>
</reference>
<reference key="2">
    <citation type="journal article" date="1992" name="Virus Res.">
        <title>Sequence and analysis of the BamHI 'D' fragment of Shope fibroma virus: comparison with similar regions of related poxviruses.</title>
        <authorList>
            <person name="Strayer D.S."/>
            <person name="Jerng H.H."/>
        </authorList>
    </citation>
    <scope>NUCLEOTIDE SEQUENCE [GENOMIC DNA] OF 26-632</scope>
</reference>
<accession>Q9Q8Z2</accession>
<proteinExistence type="inferred from homology"/>
<organismHost>
    <name type="scientific">Oryctolagus cuniculus</name>
    <name type="common">Rabbit</name>
    <dbReference type="NCBI Taxonomy" id="9986"/>
</organismHost>